<feature type="chain" id="PRO_0000249650" description="N-acetylmuramic acid 6-phosphate etherase">
    <location>
        <begin position="1"/>
        <end position="298"/>
    </location>
</feature>
<feature type="domain" description="SIS" evidence="1">
    <location>
        <begin position="55"/>
        <end position="218"/>
    </location>
</feature>
<feature type="active site" description="Proton donor" evidence="1">
    <location>
        <position position="83"/>
    </location>
</feature>
<feature type="active site" evidence="1">
    <location>
        <position position="114"/>
    </location>
</feature>
<dbReference type="EC" id="4.2.1.126" evidence="1"/>
<dbReference type="EMBL" id="CP000036">
    <property type="protein sequence ID" value="ABB67007.1"/>
    <property type="molecule type" value="Genomic_DNA"/>
</dbReference>
<dbReference type="RefSeq" id="WP_001175620.1">
    <property type="nucleotide sequence ID" value="NC_007613.1"/>
</dbReference>
<dbReference type="SMR" id="Q31Y51"/>
<dbReference type="KEGG" id="sbo:SBO_2453"/>
<dbReference type="HOGENOM" id="CLU_049049_1_1_6"/>
<dbReference type="UniPathway" id="UPA00342"/>
<dbReference type="UniPathway" id="UPA00343"/>
<dbReference type="UniPathway" id="UPA00544"/>
<dbReference type="Proteomes" id="UP000007067">
    <property type="component" value="Chromosome"/>
</dbReference>
<dbReference type="GO" id="GO:0097367">
    <property type="term" value="F:carbohydrate derivative binding"/>
    <property type="evidence" value="ECO:0007669"/>
    <property type="project" value="InterPro"/>
</dbReference>
<dbReference type="GO" id="GO:0016835">
    <property type="term" value="F:carbon-oxygen lyase activity"/>
    <property type="evidence" value="ECO:0007669"/>
    <property type="project" value="UniProtKB-UniRule"/>
</dbReference>
<dbReference type="GO" id="GO:0016803">
    <property type="term" value="F:ether hydrolase activity"/>
    <property type="evidence" value="ECO:0007669"/>
    <property type="project" value="TreeGrafter"/>
</dbReference>
<dbReference type="GO" id="GO:0097175">
    <property type="term" value="P:1,6-anhydro-N-acetyl-beta-muramic acid catabolic process"/>
    <property type="evidence" value="ECO:0007669"/>
    <property type="project" value="UniProtKB-UniRule"/>
</dbReference>
<dbReference type="GO" id="GO:0046348">
    <property type="term" value="P:amino sugar catabolic process"/>
    <property type="evidence" value="ECO:0007669"/>
    <property type="project" value="InterPro"/>
</dbReference>
<dbReference type="GO" id="GO:0097173">
    <property type="term" value="P:N-acetylmuramic acid catabolic process"/>
    <property type="evidence" value="ECO:0007669"/>
    <property type="project" value="UniProtKB-UniPathway"/>
</dbReference>
<dbReference type="GO" id="GO:0009254">
    <property type="term" value="P:peptidoglycan turnover"/>
    <property type="evidence" value="ECO:0007669"/>
    <property type="project" value="UniProtKB-UniRule"/>
</dbReference>
<dbReference type="CDD" id="cd05007">
    <property type="entry name" value="SIS_Etherase"/>
    <property type="match status" value="1"/>
</dbReference>
<dbReference type="FunFam" id="1.10.8.1080:FF:000001">
    <property type="entry name" value="N-acetylmuramic acid 6-phosphate etherase"/>
    <property type="match status" value="1"/>
</dbReference>
<dbReference type="FunFam" id="3.40.50.10490:FF:000014">
    <property type="entry name" value="N-acetylmuramic acid 6-phosphate etherase"/>
    <property type="match status" value="1"/>
</dbReference>
<dbReference type="Gene3D" id="1.10.8.1080">
    <property type="match status" value="1"/>
</dbReference>
<dbReference type="Gene3D" id="3.40.50.10490">
    <property type="entry name" value="Glucose-6-phosphate isomerase like protein, domain 1"/>
    <property type="match status" value="1"/>
</dbReference>
<dbReference type="HAMAP" id="MF_00068">
    <property type="entry name" value="MurQ"/>
    <property type="match status" value="1"/>
</dbReference>
<dbReference type="InterPro" id="IPR005488">
    <property type="entry name" value="Etherase_MurQ"/>
</dbReference>
<dbReference type="InterPro" id="IPR005486">
    <property type="entry name" value="Glucokinase_regulatory_CS"/>
</dbReference>
<dbReference type="InterPro" id="IPR040190">
    <property type="entry name" value="MURQ/GCKR"/>
</dbReference>
<dbReference type="InterPro" id="IPR001347">
    <property type="entry name" value="SIS_dom"/>
</dbReference>
<dbReference type="InterPro" id="IPR046348">
    <property type="entry name" value="SIS_dom_sf"/>
</dbReference>
<dbReference type="NCBIfam" id="TIGR00274">
    <property type="entry name" value="N-acetylmuramic acid 6-phosphate etherase"/>
    <property type="match status" value="1"/>
</dbReference>
<dbReference type="NCBIfam" id="NF003915">
    <property type="entry name" value="PRK05441.1"/>
    <property type="match status" value="1"/>
</dbReference>
<dbReference type="NCBIfam" id="NF009222">
    <property type="entry name" value="PRK12570.1"/>
    <property type="match status" value="1"/>
</dbReference>
<dbReference type="PANTHER" id="PTHR10088">
    <property type="entry name" value="GLUCOKINASE REGULATORY PROTEIN"/>
    <property type="match status" value="1"/>
</dbReference>
<dbReference type="PANTHER" id="PTHR10088:SF4">
    <property type="entry name" value="GLUCOKINASE REGULATORY PROTEIN"/>
    <property type="match status" value="1"/>
</dbReference>
<dbReference type="Pfam" id="PF22645">
    <property type="entry name" value="GKRP_SIS_N"/>
    <property type="match status" value="1"/>
</dbReference>
<dbReference type="SUPFAM" id="SSF53697">
    <property type="entry name" value="SIS domain"/>
    <property type="match status" value="1"/>
</dbReference>
<dbReference type="PROSITE" id="PS01272">
    <property type="entry name" value="GCKR"/>
    <property type="match status" value="1"/>
</dbReference>
<dbReference type="PROSITE" id="PS51464">
    <property type="entry name" value="SIS"/>
    <property type="match status" value="1"/>
</dbReference>
<sequence length="298" mass="31183">MQLEKMITEGSNAASAEIDRVSTLEMCRIINDEDKTVPLAVERVLPDIAAAIDVIHAQVSGGGRLIYLGAGTSGRLGILDASECPPTYGVKPGLVVGLIAGGEYAIQHAVEGAEDSREGGVNDLKNINLTAQDVVVGIAASGRTPYVIAGLEYARQLGCRTVGISCNPGSAVSTTAEFAITPIVGAEVVTGSSRMKAGTAQKLVLNMLSTGLMIKSGKVFGNLMVDVVATNEKLHVRQVNIVKNATGCNAEQAEAALIACERNCKTAIVMVLKNLDAAEAKKRLDQHGGFIRQVLDKE</sequence>
<keyword id="KW-0119">Carbohydrate metabolism</keyword>
<keyword id="KW-0456">Lyase</keyword>
<organism>
    <name type="scientific">Shigella boydii serotype 4 (strain Sb227)</name>
    <dbReference type="NCBI Taxonomy" id="300268"/>
    <lineage>
        <taxon>Bacteria</taxon>
        <taxon>Pseudomonadati</taxon>
        <taxon>Pseudomonadota</taxon>
        <taxon>Gammaproteobacteria</taxon>
        <taxon>Enterobacterales</taxon>
        <taxon>Enterobacteriaceae</taxon>
        <taxon>Shigella</taxon>
    </lineage>
</organism>
<accession>Q31Y51</accession>
<proteinExistence type="inferred from homology"/>
<reference key="1">
    <citation type="journal article" date="2005" name="Nucleic Acids Res.">
        <title>Genome dynamics and diversity of Shigella species, the etiologic agents of bacillary dysentery.</title>
        <authorList>
            <person name="Yang F."/>
            <person name="Yang J."/>
            <person name="Zhang X."/>
            <person name="Chen L."/>
            <person name="Jiang Y."/>
            <person name="Yan Y."/>
            <person name="Tang X."/>
            <person name="Wang J."/>
            <person name="Xiong Z."/>
            <person name="Dong J."/>
            <person name="Xue Y."/>
            <person name="Zhu Y."/>
            <person name="Xu X."/>
            <person name="Sun L."/>
            <person name="Chen S."/>
            <person name="Nie H."/>
            <person name="Peng J."/>
            <person name="Xu J."/>
            <person name="Wang Y."/>
            <person name="Yuan Z."/>
            <person name="Wen Y."/>
            <person name="Yao Z."/>
            <person name="Shen Y."/>
            <person name="Qiang B."/>
            <person name="Hou Y."/>
            <person name="Yu J."/>
            <person name="Jin Q."/>
        </authorList>
    </citation>
    <scope>NUCLEOTIDE SEQUENCE [LARGE SCALE GENOMIC DNA]</scope>
    <source>
        <strain>Sb227</strain>
    </source>
</reference>
<comment type="function">
    <text evidence="1">Specifically catalyzes the cleavage of the D-lactyl ether substituent of MurNAc 6-phosphate, producing GlcNAc 6-phosphate and D-lactate. Together with AnmK, is also required for the utilization of anhydro-N-acetylmuramic acid (anhMurNAc) either imported from the medium or derived from its own cell wall murein, and thus plays a role in cell wall recycling.</text>
</comment>
<comment type="catalytic activity">
    <reaction evidence="1">
        <text>N-acetyl-D-muramate 6-phosphate + H2O = N-acetyl-D-glucosamine 6-phosphate + (R)-lactate</text>
        <dbReference type="Rhea" id="RHEA:26410"/>
        <dbReference type="ChEBI" id="CHEBI:15377"/>
        <dbReference type="ChEBI" id="CHEBI:16004"/>
        <dbReference type="ChEBI" id="CHEBI:57513"/>
        <dbReference type="ChEBI" id="CHEBI:58722"/>
        <dbReference type="EC" id="4.2.1.126"/>
    </reaction>
</comment>
<comment type="pathway">
    <text evidence="1">Amino-sugar metabolism; 1,6-anhydro-N-acetylmuramate degradation.</text>
</comment>
<comment type="pathway">
    <text evidence="1">Amino-sugar metabolism; N-acetylmuramate degradation.</text>
</comment>
<comment type="pathway">
    <text evidence="1">Cell wall biogenesis; peptidoglycan recycling.</text>
</comment>
<comment type="subunit">
    <text evidence="1">Homodimer.</text>
</comment>
<comment type="induction">
    <text evidence="1">Induced by MurNAc 6-phosphate that releases the repressor MurR from the DNA. Repressed by MurR in the absence of MurNAc 6-phosphate.</text>
</comment>
<comment type="miscellaneous">
    <text evidence="1">A lyase-type mechanism (elimination/hydration) is suggested for the cleavage of the lactyl ether bond of MurNAc 6-phosphate, with the formation of an alpha,beta-unsaturated aldehyde intermediate with (E)-stereochemistry, followed by the syn addition of water to give product.</text>
</comment>
<comment type="similarity">
    <text evidence="1">Belongs to the GCKR-like family. MurNAc-6-P etherase subfamily.</text>
</comment>
<gene>
    <name evidence="1" type="primary">murQ</name>
    <name type="ordered locus">SBO_2453</name>
</gene>
<name>MURQ_SHIBS</name>
<protein>
    <recommendedName>
        <fullName evidence="1">N-acetylmuramic acid 6-phosphate etherase</fullName>
        <shortName evidence="1">MurNAc-6-P etherase</shortName>
        <ecNumber evidence="1">4.2.1.126</ecNumber>
    </recommendedName>
    <alternativeName>
        <fullName evidence="1">N-acetylmuramic acid 6-phosphate hydrolase</fullName>
    </alternativeName>
    <alternativeName>
        <fullName evidence="1">N-acetylmuramic acid 6-phosphate lyase</fullName>
    </alternativeName>
</protein>
<evidence type="ECO:0000255" key="1">
    <source>
        <dbReference type="HAMAP-Rule" id="MF_00068"/>
    </source>
</evidence>